<gene>
    <name evidence="1" type="primary">rnhB</name>
    <name type="ordered locus">YPTS_3109</name>
</gene>
<organism>
    <name type="scientific">Yersinia pseudotuberculosis serotype IB (strain PB1/+)</name>
    <dbReference type="NCBI Taxonomy" id="502801"/>
    <lineage>
        <taxon>Bacteria</taxon>
        <taxon>Pseudomonadati</taxon>
        <taxon>Pseudomonadota</taxon>
        <taxon>Gammaproteobacteria</taxon>
        <taxon>Enterobacterales</taxon>
        <taxon>Yersiniaceae</taxon>
        <taxon>Yersinia</taxon>
    </lineage>
</organism>
<evidence type="ECO:0000255" key="1">
    <source>
        <dbReference type="HAMAP-Rule" id="MF_00052"/>
    </source>
</evidence>
<evidence type="ECO:0000255" key="2">
    <source>
        <dbReference type="PROSITE-ProRule" id="PRU01319"/>
    </source>
</evidence>
<dbReference type="EC" id="3.1.26.4" evidence="1"/>
<dbReference type="EMBL" id="CP001048">
    <property type="protein sequence ID" value="ACC90064.1"/>
    <property type="molecule type" value="Genomic_DNA"/>
</dbReference>
<dbReference type="RefSeq" id="WP_002212145.1">
    <property type="nucleotide sequence ID" value="NZ_CP009780.1"/>
</dbReference>
<dbReference type="SMR" id="B2JZ20"/>
<dbReference type="GeneID" id="57977503"/>
<dbReference type="KEGG" id="ypb:YPTS_3109"/>
<dbReference type="PATRIC" id="fig|502801.10.peg.2541"/>
<dbReference type="GO" id="GO:0005737">
    <property type="term" value="C:cytoplasm"/>
    <property type="evidence" value="ECO:0007669"/>
    <property type="project" value="UniProtKB-SubCell"/>
</dbReference>
<dbReference type="GO" id="GO:0032299">
    <property type="term" value="C:ribonuclease H2 complex"/>
    <property type="evidence" value="ECO:0007669"/>
    <property type="project" value="TreeGrafter"/>
</dbReference>
<dbReference type="GO" id="GO:0030145">
    <property type="term" value="F:manganese ion binding"/>
    <property type="evidence" value="ECO:0007669"/>
    <property type="project" value="UniProtKB-UniRule"/>
</dbReference>
<dbReference type="GO" id="GO:0003723">
    <property type="term" value="F:RNA binding"/>
    <property type="evidence" value="ECO:0007669"/>
    <property type="project" value="InterPro"/>
</dbReference>
<dbReference type="GO" id="GO:0004523">
    <property type="term" value="F:RNA-DNA hybrid ribonuclease activity"/>
    <property type="evidence" value="ECO:0007669"/>
    <property type="project" value="UniProtKB-UniRule"/>
</dbReference>
<dbReference type="GO" id="GO:0043137">
    <property type="term" value="P:DNA replication, removal of RNA primer"/>
    <property type="evidence" value="ECO:0007669"/>
    <property type="project" value="TreeGrafter"/>
</dbReference>
<dbReference type="GO" id="GO:0006298">
    <property type="term" value="P:mismatch repair"/>
    <property type="evidence" value="ECO:0007669"/>
    <property type="project" value="TreeGrafter"/>
</dbReference>
<dbReference type="CDD" id="cd07182">
    <property type="entry name" value="RNase_HII_bacteria_HII_like"/>
    <property type="match status" value="1"/>
</dbReference>
<dbReference type="FunFam" id="3.30.420.10:FF:000006">
    <property type="entry name" value="Ribonuclease HII"/>
    <property type="match status" value="1"/>
</dbReference>
<dbReference type="Gene3D" id="3.30.420.10">
    <property type="entry name" value="Ribonuclease H-like superfamily/Ribonuclease H"/>
    <property type="match status" value="1"/>
</dbReference>
<dbReference type="HAMAP" id="MF_00052_B">
    <property type="entry name" value="RNase_HII_B"/>
    <property type="match status" value="1"/>
</dbReference>
<dbReference type="InterPro" id="IPR022898">
    <property type="entry name" value="RNase_HII"/>
</dbReference>
<dbReference type="InterPro" id="IPR001352">
    <property type="entry name" value="RNase_HII/HIII"/>
</dbReference>
<dbReference type="InterPro" id="IPR024567">
    <property type="entry name" value="RNase_HII/HIII_dom"/>
</dbReference>
<dbReference type="InterPro" id="IPR012337">
    <property type="entry name" value="RNaseH-like_sf"/>
</dbReference>
<dbReference type="InterPro" id="IPR036397">
    <property type="entry name" value="RNaseH_sf"/>
</dbReference>
<dbReference type="NCBIfam" id="NF000594">
    <property type="entry name" value="PRK00015.1-1"/>
    <property type="match status" value="1"/>
</dbReference>
<dbReference type="NCBIfam" id="NF000595">
    <property type="entry name" value="PRK00015.1-3"/>
    <property type="match status" value="1"/>
</dbReference>
<dbReference type="NCBIfam" id="NF000596">
    <property type="entry name" value="PRK00015.1-4"/>
    <property type="match status" value="1"/>
</dbReference>
<dbReference type="PANTHER" id="PTHR10954">
    <property type="entry name" value="RIBONUCLEASE H2 SUBUNIT A"/>
    <property type="match status" value="1"/>
</dbReference>
<dbReference type="PANTHER" id="PTHR10954:SF18">
    <property type="entry name" value="RIBONUCLEASE HII"/>
    <property type="match status" value="1"/>
</dbReference>
<dbReference type="Pfam" id="PF01351">
    <property type="entry name" value="RNase_HII"/>
    <property type="match status" value="1"/>
</dbReference>
<dbReference type="SUPFAM" id="SSF53098">
    <property type="entry name" value="Ribonuclease H-like"/>
    <property type="match status" value="1"/>
</dbReference>
<dbReference type="PROSITE" id="PS51975">
    <property type="entry name" value="RNASE_H_2"/>
    <property type="match status" value="1"/>
</dbReference>
<feature type="chain" id="PRO_1000091670" description="Ribonuclease HII">
    <location>
        <begin position="1"/>
        <end position="198"/>
    </location>
</feature>
<feature type="domain" description="RNase H type-2" evidence="2">
    <location>
        <begin position="11"/>
        <end position="198"/>
    </location>
</feature>
<feature type="binding site" evidence="1">
    <location>
        <position position="17"/>
    </location>
    <ligand>
        <name>a divalent metal cation</name>
        <dbReference type="ChEBI" id="CHEBI:60240"/>
    </ligand>
</feature>
<feature type="binding site" evidence="1">
    <location>
        <position position="18"/>
    </location>
    <ligand>
        <name>a divalent metal cation</name>
        <dbReference type="ChEBI" id="CHEBI:60240"/>
    </ligand>
</feature>
<feature type="binding site" evidence="1">
    <location>
        <position position="109"/>
    </location>
    <ligand>
        <name>a divalent metal cation</name>
        <dbReference type="ChEBI" id="CHEBI:60240"/>
    </ligand>
</feature>
<protein>
    <recommendedName>
        <fullName evidence="1">Ribonuclease HII</fullName>
        <shortName evidence="1">RNase HII</shortName>
        <ecNumber evidence="1">3.1.26.4</ecNumber>
    </recommendedName>
</protein>
<accession>B2JZ20</accession>
<comment type="function">
    <text evidence="1">Endonuclease that specifically degrades the RNA of RNA-DNA hybrids.</text>
</comment>
<comment type="catalytic activity">
    <reaction evidence="1">
        <text>Endonucleolytic cleavage to 5'-phosphomonoester.</text>
        <dbReference type="EC" id="3.1.26.4"/>
    </reaction>
</comment>
<comment type="cofactor">
    <cofactor evidence="1">
        <name>Mn(2+)</name>
        <dbReference type="ChEBI" id="CHEBI:29035"/>
    </cofactor>
    <cofactor evidence="1">
        <name>Mg(2+)</name>
        <dbReference type="ChEBI" id="CHEBI:18420"/>
    </cofactor>
    <text evidence="1">Manganese or magnesium. Binds 1 divalent metal ion per monomer in the absence of substrate. May bind a second metal ion after substrate binding.</text>
</comment>
<comment type="subcellular location">
    <subcellularLocation>
        <location evidence="1">Cytoplasm</location>
    </subcellularLocation>
</comment>
<comment type="similarity">
    <text evidence="1">Belongs to the RNase HII family.</text>
</comment>
<reference key="1">
    <citation type="submission" date="2008-04" db="EMBL/GenBank/DDBJ databases">
        <title>Complete sequence of Yersinia pseudotuberculosis PB1/+.</title>
        <authorList>
            <person name="Copeland A."/>
            <person name="Lucas S."/>
            <person name="Lapidus A."/>
            <person name="Glavina del Rio T."/>
            <person name="Dalin E."/>
            <person name="Tice H."/>
            <person name="Bruce D."/>
            <person name="Goodwin L."/>
            <person name="Pitluck S."/>
            <person name="Munk A.C."/>
            <person name="Brettin T."/>
            <person name="Detter J.C."/>
            <person name="Han C."/>
            <person name="Tapia R."/>
            <person name="Schmutz J."/>
            <person name="Larimer F."/>
            <person name="Land M."/>
            <person name="Hauser L."/>
            <person name="Challacombe J.F."/>
            <person name="Green L."/>
            <person name="Lindler L.E."/>
            <person name="Nikolich M.P."/>
            <person name="Richardson P."/>
        </authorList>
    </citation>
    <scope>NUCLEOTIDE SEQUENCE [LARGE SCALE GENOMIC DNA]</scope>
    <source>
        <strain>PB1/+</strain>
    </source>
</reference>
<name>RNH2_YERPB</name>
<keyword id="KW-0963">Cytoplasm</keyword>
<keyword id="KW-0255">Endonuclease</keyword>
<keyword id="KW-0378">Hydrolase</keyword>
<keyword id="KW-0464">Manganese</keyword>
<keyword id="KW-0479">Metal-binding</keyword>
<keyword id="KW-0540">Nuclease</keyword>
<proteinExistence type="inferred from homology"/>
<sequence>MSETFIYPQANLIAGVDEVGRGPLVGAVVTAAVILDPNRPIVGLADSKKLSEKRRLSLYDEITEKALSWSLGRAEPEEIDQLNILHATMLAMQRAVSGLHIVPDYVLIDGNRCPKLQMPSLAVVKGDSRVAEISAASILAKVTRDREMTELDLLFPEYGFAQHKGYPTAFHLEKLAALGATVHHRRSFGPVKRVLGLV</sequence>